<feature type="chain" id="PRO_0000360388" description="Putative uncharacterized protein ycf15">
    <location>
        <begin position="1"/>
        <end position="40"/>
    </location>
</feature>
<proteinExistence type="uncertain"/>
<organism>
    <name type="scientific">Lobularia maritima</name>
    <name type="common">Sweet alyssum</name>
    <name type="synonym">Alyssum maritimum</name>
    <dbReference type="NCBI Taxonomy" id="226051"/>
    <lineage>
        <taxon>Eukaryota</taxon>
        <taxon>Viridiplantae</taxon>
        <taxon>Streptophyta</taxon>
        <taxon>Embryophyta</taxon>
        <taxon>Tracheophyta</taxon>
        <taxon>Spermatophyta</taxon>
        <taxon>Magnoliopsida</taxon>
        <taxon>eudicotyledons</taxon>
        <taxon>Gunneridae</taxon>
        <taxon>Pentapetalae</taxon>
        <taxon>rosids</taxon>
        <taxon>malvids</taxon>
        <taxon>Brassicales</taxon>
        <taxon>Brassicaceae</taxon>
        <taxon>Anastaticeae</taxon>
        <taxon>Lobularia</taxon>
    </lineage>
</organism>
<dbReference type="EMBL" id="AP009375">
    <property type="protein sequence ID" value="BAF50593.1"/>
    <property type="molecule type" value="Genomic_DNA"/>
</dbReference>
<dbReference type="EMBL" id="AP009375">
    <property type="protein sequence ID" value="BAF50614.1"/>
    <property type="molecule type" value="Genomic_DNA"/>
</dbReference>
<dbReference type="GO" id="GO:0009507">
    <property type="term" value="C:chloroplast"/>
    <property type="evidence" value="ECO:0007669"/>
    <property type="project" value="UniProtKB-SubCell"/>
</dbReference>
<dbReference type="InterPro" id="IPR019645">
    <property type="entry name" value="Uncharacterised_Ycf15"/>
</dbReference>
<dbReference type="Pfam" id="PF10705">
    <property type="entry name" value="Ycf15"/>
    <property type="match status" value="1"/>
</dbReference>
<geneLocation type="chloroplast"/>
<sequence length="40" mass="4807">MLLLKHGRIEILDQNTMYGWYELPKQEFLNSEQPELLLTT</sequence>
<protein>
    <recommendedName>
        <fullName>Putative uncharacterized protein ycf15</fullName>
    </recommendedName>
    <alternativeName>
        <fullName>Orf77</fullName>
    </alternativeName>
</protein>
<gene>
    <name type="primary">ycf15-A</name>
</gene>
<gene>
    <name type="primary">ycf15-B</name>
</gene>
<evidence type="ECO:0000305" key="1"/>
<reference key="1">
    <citation type="submission" date="2007-03" db="EMBL/GenBank/DDBJ databases">
        <title>Sequencing analysis of Lobularia maritima chloroplast DNA.</title>
        <authorList>
            <person name="Hosouchi T."/>
            <person name="Tsuruoka H."/>
            <person name="Kotani H."/>
        </authorList>
    </citation>
    <scope>NUCLEOTIDE SEQUENCE [LARGE SCALE GENOMIC DNA]</scope>
</reference>
<name>YCF15_LOBMA</name>
<keyword id="KW-0150">Chloroplast</keyword>
<keyword id="KW-0934">Plastid</keyword>
<accession>A4QLN8</accession>
<comment type="subcellular location">
    <subcellularLocation>
        <location>Plastid</location>
        <location>Chloroplast</location>
    </subcellularLocation>
</comment>
<comment type="similarity">
    <text evidence="1">Belongs to the ycf15 family.</text>
</comment>
<comment type="caution">
    <text evidence="1">Could be the product of a pseudogene.</text>
</comment>